<gene>
    <name type="primary">Cts7</name>
</gene>
<evidence type="ECO:0000250" key="1">
    <source>
        <dbReference type="UniProtKB" id="O60911"/>
    </source>
</evidence>
<evidence type="ECO:0000250" key="2">
    <source>
        <dbReference type="UniProtKB" id="Q91ZF2"/>
    </source>
</evidence>
<evidence type="ECO:0000255" key="3"/>
<evidence type="ECO:0000255" key="4">
    <source>
        <dbReference type="PROSITE-ProRule" id="PRU10088"/>
    </source>
</evidence>
<evidence type="ECO:0000255" key="5">
    <source>
        <dbReference type="PROSITE-ProRule" id="PRU10089"/>
    </source>
</evidence>
<evidence type="ECO:0000312" key="6">
    <source>
        <dbReference type="EMBL" id="EDL93846.1"/>
    </source>
</evidence>
<proteinExistence type="inferred from homology"/>
<accession>D3ZZ07</accession>
<comment type="function">
    <text evidence="2">Involved in trophoblast cell proliferation and differentiation probably by affecting mitotic cell cycle progression. Proteolytic activity and nuclear localization are essential for its role in cell cycle progression (By similarity).</text>
</comment>
<comment type="subcellular location">
    <subcellularLocation>
        <location evidence="2">Endosome</location>
    </subcellularLocation>
    <subcellularLocation>
        <location evidence="2">Lysosome</location>
    </subcellularLocation>
    <subcellularLocation>
        <location evidence="2">Cytoplasm</location>
        <location evidence="2">Perinuclear region</location>
    </subcellularLocation>
    <subcellularLocation>
        <location evidence="2">Golgi apparatus</location>
    </subcellularLocation>
    <subcellularLocation>
        <location evidence="2">Nucleus</location>
    </subcellularLocation>
    <subcellularLocation>
        <location evidence="2">Secreted</location>
        <location evidence="2">Extracellular space</location>
    </subcellularLocation>
</comment>
<comment type="similarity">
    <text evidence="4 5">Belongs to the peptidase C1 family.</text>
</comment>
<name>CAT7_RAT</name>
<protein>
    <recommendedName>
        <fullName evidence="6">Cathepsin 7</fullName>
        <ecNumber>3.4.22.-</ecNumber>
    </recommendedName>
</protein>
<keyword id="KW-0131">Cell cycle</keyword>
<keyword id="KW-0132">Cell division</keyword>
<keyword id="KW-0963">Cytoplasm</keyword>
<keyword id="KW-1015">Disulfide bond</keyword>
<keyword id="KW-0967">Endosome</keyword>
<keyword id="KW-0325">Glycoprotein</keyword>
<keyword id="KW-0333">Golgi apparatus</keyword>
<keyword id="KW-0378">Hydrolase</keyword>
<keyword id="KW-0458">Lysosome</keyword>
<keyword id="KW-0498">Mitosis</keyword>
<keyword id="KW-0539">Nucleus</keyword>
<keyword id="KW-0645">Protease</keyword>
<keyword id="KW-1185">Reference proteome</keyword>
<keyword id="KW-0964">Secreted</keyword>
<keyword id="KW-0732">Signal</keyword>
<keyword id="KW-0788">Thiol protease</keyword>
<keyword id="KW-0865">Zymogen</keyword>
<reference evidence="6" key="1">
    <citation type="submission" date="2005-07" db="EMBL/GenBank/DDBJ databases">
        <authorList>
            <person name="Mural R.J."/>
            <person name="Adams M.D."/>
            <person name="Myers E.W."/>
            <person name="Smith H.O."/>
            <person name="Venter J.C."/>
        </authorList>
    </citation>
    <scope>NUCLEOTIDE SEQUENCE [LARGE SCALE GENOMIC DNA]</scope>
</reference>
<sequence>MTVAVFLAILCLRAALAAPRPDYSLDAEWEEWKRNNAKTYSPEEEKQRRAVWEENVKMIKWHTMQNGLWMNNFTIEMNEFGDMTGEEMRMMTDSSALTLRNGKHIQKRNVKIPKTLDWRDTGCVAPVRSQGGCGACWAFSVAASIESQLFKKTGKLIPLSVQNLIDCTVTYGNNDCSGGKPYTAFQYVKNNGGLEAEATYPYEAKLRHCRYRPERSVVKIARFFVVPRNEEALMQALVTYGPIAVAIDGSHASFKRYRGGIYHEPKCRRDTLDHGLLLVGYGYEGHESENRKYWLLKNSHGEQWGERGYMKLPRDQNNYCGIASYAMYPLL</sequence>
<dbReference type="EC" id="3.4.22.-"/>
<dbReference type="EMBL" id="CH474032">
    <property type="protein sequence ID" value="EDL93846.1"/>
    <property type="molecule type" value="Genomic_DNA"/>
</dbReference>
<dbReference type="RefSeq" id="NP_001099569.1">
    <property type="nucleotide sequence ID" value="NM_001106099.1"/>
</dbReference>
<dbReference type="SMR" id="D3ZZ07"/>
<dbReference type="FunCoup" id="D3ZZ07">
    <property type="interactions" value="26"/>
</dbReference>
<dbReference type="STRING" id="10116.ENSRNOP00000051349"/>
<dbReference type="MEROPS" id="C01.016"/>
<dbReference type="GlyCosmos" id="D3ZZ07">
    <property type="glycosylation" value="1 site, No reported glycans"/>
</dbReference>
<dbReference type="GlyGen" id="D3ZZ07">
    <property type="glycosylation" value="1 site"/>
</dbReference>
<dbReference type="PaxDb" id="10116-ENSRNOP00000051349"/>
<dbReference type="Ensembl" id="ENSRNOT00000043686.3">
    <property type="protein sequence ID" value="ENSRNOP00000051349.2"/>
    <property type="gene ID" value="ENSRNOG00000033540.3"/>
</dbReference>
<dbReference type="GeneID" id="290970"/>
<dbReference type="KEGG" id="rno:290970"/>
<dbReference type="UCSC" id="RGD:1309226">
    <property type="organism name" value="rat"/>
</dbReference>
<dbReference type="AGR" id="RGD:1309226"/>
<dbReference type="CTD" id="56092"/>
<dbReference type="RGD" id="1309226">
    <property type="gene designation" value="Cts7"/>
</dbReference>
<dbReference type="eggNOG" id="KOG1543">
    <property type="taxonomic scope" value="Eukaryota"/>
</dbReference>
<dbReference type="GeneTree" id="ENSGT00940000153321"/>
<dbReference type="HOGENOM" id="CLU_012184_1_2_1"/>
<dbReference type="InParanoid" id="D3ZZ07"/>
<dbReference type="OMA" id="DNMAEIV"/>
<dbReference type="OrthoDB" id="190265at2759"/>
<dbReference type="PhylomeDB" id="D3ZZ07"/>
<dbReference type="TreeFam" id="TF313739"/>
<dbReference type="PRO" id="PR:D3ZZ07"/>
<dbReference type="Proteomes" id="UP000002494">
    <property type="component" value="Chromosome 17"/>
</dbReference>
<dbReference type="Proteomes" id="UP000234681">
    <property type="component" value="Chromosome 17"/>
</dbReference>
<dbReference type="GO" id="GO:0005768">
    <property type="term" value="C:endosome"/>
    <property type="evidence" value="ECO:0000266"/>
    <property type="project" value="RGD"/>
</dbReference>
<dbReference type="GO" id="GO:0005576">
    <property type="term" value="C:extracellular region"/>
    <property type="evidence" value="ECO:0000266"/>
    <property type="project" value="RGD"/>
</dbReference>
<dbReference type="GO" id="GO:0005615">
    <property type="term" value="C:extracellular space"/>
    <property type="evidence" value="ECO:0000318"/>
    <property type="project" value="GO_Central"/>
</dbReference>
<dbReference type="GO" id="GO:0005794">
    <property type="term" value="C:Golgi apparatus"/>
    <property type="evidence" value="ECO:0000266"/>
    <property type="project" value="RGD"/>
</dbReference>
<dbReference type="GO" id="GO:0005764">
    <property type="term" value="C:lysosome"/>
    <property type="evidence" value="ECO:0000266"/>
    <property type="project" value="RGD"/>
</dbReference>
<dbReference type="GO" id="GO:0005634">
    <property type="term" value="C:nucleus"/>
    <property type="evidence" value="ECO:0000266"/>
    <property type="project" value="RGD"/>
</dbReference>
<dbReference type="GO" id="GO:0048471">
    <property type="term" value="C:perinuclear region of cytoplasm"/>
    <property type="evidence" value="ECO:0007669"/>
    <property type="project" value="UniProtKB-SubCell"/>
</dbReference>
<dbReference type="GO" id="GO:0004197">
    <property type="term" value="F:cysteine-type endopeptidase activity"/>
    <property type="evidence" value="ECO:0000318"/>
    <property type="project" value="GO_Central"/>
</dbReference>
<dbReference type="GO" id="GO:0051301">
    <property type="term" value="P:cell division"/>
    <property type="evidence" value="ECO:0007669"/>
    <property type="project" value="UniProtKB-KW"/>
</dbReference>
<dbReference type="GO" id="GO:0000278">
    <property type="term" value="P:mitotic cell cycle"/>
    <property type="evidence" value="ECO:0000266"/>
    <property type="project" value="RGD"/>
</dbReference>
<dbReference type="GO" id="GO:0045930">
    <property type="term" value="P:negative regulation of mitotic cell cycle"/>
    <property type="evidence" value="ECO:0000266"/>
    <property type="project" value="RGD"/>
</dbReference>
<dbReference type="GO" id="GO:0051603">
    <property type="term" value="P:proteolysis involved in protein catabolic process"/>
    <property type="evidence" value="ECO:0000318"/>
    <property type="project" value="GO_Central"/>
</dbReference>
<dbReference type="GO" id="GO:0060707">
    <property type="term" value="P:trophoblast giant cell differentiation"/>
    <property type="evidence" value="ECO:0000266"/>
    <property type="project" value="RGD"/>
</dbReference>
<dbReference type="CDD" id="cd02248">
    <property type="entry name" value="Peptidase_C1A"/>
    <property type="match status" value="1"/>
</dbReference>
<dbReference type="FunFam" id="3.90.70.10:FF:000338">
    <property type="entry name" value="Cathepsin 7"/>
    <property type="match status" value="1"/>
</dbReference>
<dbReference type="Gene3D" id="3.90.70.10">
    <property type="entry name" value="Cysteine proteinases"/>
    <property type="match status" value="1"/>
</dbReference>
<dbReference type="InterPro" id="IPR038765">
    <property type="entry name" value="Papain-like_cys_pep_sf"/>
</dbReference>
<dbReference type="InterPro" id="IPR000169">
    <property type="entry name" value="Pept_cys_AS"/>
</dbReference>
<dbReference type="InterPro" id="IPR025660">
    <property type="entry name" value="Pept_his_AS"/>
</dbReference>
<dbReference type="InterPro" id="IPR013128">
    <property type="entry name" value="Peptidase_C1A"/>
</dbReference>
<dbReference type="InterPro" id="IPR000668">
    <property type="entry name" value="Peptidase_C1A_C"/>
</dbReference>
<dbReference type="InterPro" id="IPR039417">
    <property type="entry name" value="Peptidase_C1A_papain-like"/>
</dbReference>
<dbReference type="InterPro" id="IPR013201">
    <property type="entry name" value="Prot_inhib_I29"/>
</dbReference>
<dbReference type="PANTHER" id="PTHR12411">
    <property type="entry name" value="CYSTEINE PROTEASE FAMILY C1-RELATED"/>
    <property type="match status" value="1"/>
</dbReference>
<dbReference type="Pfam" id="PF08246">
    <property type="entry name" value="Inhibitor_I29"/>
    <property type="match status" value="1"/>
</dbReference>
<dbReference type="Pfam" id="PF00112">
    <property type="entry name" value="Peptidase_C1"/>
    <property type="match status" value="1"/>
</dbReference>
<dbReference type="PRINTS" id="PR00705">
    <property type="entry name" value="PAPAIN"/>
</dbReference>
<dbReference type="SMART" id="SM00848">
    <property type="entry name" value="Inhibitor_I29"/>
    <property type="match status" value="1"/>
</dbReference>
<dbReference type="SMART" id="SM00645">
    <property type="entry name" value="Pept_C1"/>
    <property type="match status" value="1"/>
</dbReference>
<dbReference type="SUPFAM" id="SSF54001">
    <property type="entry name" value="Cysteine proteinases"/>
    <property type="match status" value="1"/>
</dbReference>
<dbReference type="PROSITE" id="PS00139">
    <property type="entry name" value="THIOL_PROTEASE_CYS"/>
    <property type="match status" value="1"/>
</dbReference>
<dbReference type="PROSITE" id="PS00639">
    <property type="entry name" value="THIOL_PROTEASE_HIS"/>
    <property type="match status" value="1"/>
</dbReference>
<organism>
    <name type="scientific">Rattus norvegicus</name>
    <name type="common">Rat</name>
    <dbReference type="NCBI Taxonomy" id="10116"/>
    <lineage>
        <taxon>Eukaryota</taxon>
        <taxon>Metazoa</taxon>
        <taxon>Chordata</taxon>
        <taxon>Craniata</taxon>
        <taxon>Vertebrata</taxon>
        <taxon>Euteleostomi</taxon>
        <taxon>Mammalia</taxon>
        <taxon>Eutheria</taxon>
        <taxon>Euarchontoglires</taxon>
        <taxon>Glires</taxon>
        <taxon>Rodentia</taxon>
        <taxon>Myomorpha</taxon>
        <taxon>Muroidea</taxon>
        <taxon>Muridae</taxon>
        <taxon>Murinae</taxon>
        <taxon>Rattus</taxon>
    </lineage>
</organism>
<feature type="signal peptide" evidence="3">
    <location>
        <begin position="1"/>
        <end position="17"/>
    </location>
</feature>
<feature type="propeptide" id="PRO_0000415397" description="Activation peptide" evidence="1">
    <location>
        <begin position="18"/>
        <end position="111"/>
    </location>
</feature>
<feature type="chain" id="PRO_0000415398" description="Cathepsin 7" evidence="1">
    <location>
        <begin position="112"/>
        <end position="331"/>
    </location>
</feature>
<feature type="short sequence motif" description="Nuclear localization signal" evidence="2">
    <location>
        <begin position="33"/>
        <end position="50"/>
    </location>
</feature>
<feature type="active site" evidence="1">
    <location>
        <position position="136"/>
    </location>
</feature>
<feature type="active site" evidence="1">
    <location>
        <position position="274"/>
    </location>
</feature>
<feature type="active site" evidence="1">
    <location>
        <position position="298"/>
    </location>
</feature>
<feature type="glycosylation site" description="N-linked (GlcNAc...) asparagine" evidence="3">
    <location>
        <position position="72"/>
    </location>
</feature>
<feature type="disulfide bond" evidence="1">
    <location>
        <begin position="133"/>
        <end position="176"/>
    </location>
</feature>
<feature type="disulfide bond" evidence="1">
    <location>
        <begin position="167"/>
        <end position="209"/>
    </location>
</feature>
<feature type="disulfide bond" evidence="1">
    <location>
        <begin position="267"/>
        <end position="320"/>
    </location>
</feature>